<protein>
    <recommendedName>
        <fullName evidence="1">Putative transport protein VIBHAR_02636</fullName>
    </recommendedName>
</protein>
<keyword id="KW-1003">Cell membrane</keyword>
<keyword id="KW-0472">Membrane</keyword>
<keyword id="KW-0677">Repeat</keyword>
<keyword id="KW-0812">Transmembrane</keyword>
<keyword id="KW-1133">Transmembrane helix</keyword>
<keyword id="KW-0813">Transport</keyword>
<reference key="1">
    <citation type="submission" date="2007-08" db="EMBL/GenBank/DDBJ databases">
        <authorList>
            <consortium name="The Vibrio harveyi Genome Sequencing Project"/>
            <person name="Bassler B."/>
            <person name="Clifton S.W."/>
            <person name="Fulton L."/>
            <person name="Delehaunty K."/>
            <person name="Fronick C."/>
            <person name="Harrison M."/>
            <person name="Markivic C."/>
            <person name="Fulton R."/>
            <person name="Tin-Wollam A.-M."/>
            <person name="Shah N."/>
            <person name="Pepin K."/>
            <person name="Nash W."/>
            <person name="Thiruvilangam P."/>
            <person name="Bhonagiri V."/>
            <person name="Waters C."/>
            <person name="Tu K.C."/>
            <person name="Irgon J."/>
            <person name="Wilson R.K."/>
        </authorList>
    </citation>
    <scope>NUCLEOTIDE SEQUENCE [LARGE SCALE GENOMIC DNA]</scope>
    <source>
        <strain>ATCC BAA-1116 / BB120</strain>
    </source>
</reference>
<evidence type="ECO:0000255" key="1">
    <source>
        <dbReference type="HAMAP-Rule" id="MF_01015"/>
    </source>
</evidence>
<name>Y2636_VIBC1</name>
<feature type="chain" id="PRO_0000329150" description="Putative transport protein VIBHAR_02636">
    <location>
        <begin position="1"/>
        <end position="560"/>
    </location>
</feature>
<feature type="transmembrane region" description="Helical" evidence="1">
    <location>
        <begin position="8"/>
        <end position="28"/>
    </location>
</feature>
<feature type="transmembrane region" description="Helical" evidence="1">
    <location>
        <begin position="37"/>
        <end position="57"/>
    </location>
</feature>
<feature type="transmembrane region" description="Helical" evidence="1">
    <location>
        <begin position="66"/>
        <end position="86"/>
    </location>
</feature>
<feature type="transmembrane region" description="Helical" evidence="1">
    <location>
        <begin position="91"/>
        <end position="111"/>
    </location>
</feature>
<feature type="transmembrane region" description="Helical" evidence="1">
    <location>
        <begin position="164"/>
        <end position="184"/>
    </location>
</feature>
<feature type="transmembrane region" description="Helical" evidence="1">
    <location>
        <begin position="386"/>
        <end position="406"/>
    </location>
</feature>
<feature type="transmembrane region" description="Helical" evidence="1">
    <location>
        <begin position="409"/>
        <end position="429"/>
    </location>
</feature>
<feature type="transmembrane region" description="Helical" evidence="1">
    <location>
        <begin position="450"/>
        <end position="470"/>
    </location>
</feature>
<feature type="transmembrane region" description="Helical" evidence="1">
    <location>
        <begin position="478"/>
        <end position="498"/>
    </location>
</feature>
<feature type="transmembrane region" description="Helical" evidence="1">
    <location>
        <begin position="505"/>
        <end position="525"/>
    </location>
</feature>
<feature type="transmembrane region" description="Helical" evidence="1">
    <location>
        <begin position="539"/>
        <end position="559"/>
    </location>
</feature>
<feature type="domain" description="RCK C-terminal 1" evidence="1">
    <location>
        <begin position="205"/>
        <end position="292"/>
    </location>
</feature>
<feature type="domain" description="RCK C-terminal 2" evidence="1">
    <location>
        <begin position="293"/>
        <end position="376"/>
    </location>
</feature>
<comment type="subcellular location">
    <subcellularLocation>
        <location evidence="1">Cell membrane</location>
        <topology evidence="1">Multi-pass membrane protein</topology>
    </subcellularLocation>
</comment>
<comment type="similarity">
    <text evidence="1">Belongs to the AAE transporter (TC 2.A.81) family. YbjL subfamily.</text>
</comment>
<sequence>MNIDVVHLLEQNPILLIFVVLAIGLAFGKIRFGKLQLGNSIGVLITSLVMGHLGFSFNAEALTIGFMLFIYCVGIEAGPNFFGIFFRDGKHYFILSMTVLVSAVGLTYFCSHYMGLDFGLSAGMMAGALTATPVLVGAQDALNSGLATIPRNMDFSLVLENLSVGYAMAYLVGLISMIMFAKLLPKLQKQNLSDSAQQIAQERGLGNSSQRKVYLPIIRAYRVGPELIDWTDGKNLRELGIYRQTGCYIERIRRNGILAHPDGDAILQEGDEIALVGFPDSHARLDPSFRNGKEVFDRNLLDLRIVEEEIVVKSDAIAGKRLSDLNLSEFGCFLNRVVRAQIEMPMDLDIVLAKGDVLQVSGEKSRVHGLAEKIGFISIHSQMADLLAFCSFFILGIMFGLVTMTFGQVSFSLGNAVGLLLSGITLGFLRANHPTFGYVPQGALNMVKDLGLMFFMVGIGLSAGGKIFEHLSQVGPQIIGLAFIVSVVPVVLAYLVGAYVLKMNSALLFGAIIGARTCAPAMDVVNEYAKSTIPALGYAGTYAIANILMTLAGTILIILS</sequence>
<proteinExistence type="inferred from homology"/>
<organism>
    <name type="scientific">Vibrio campbellii (strain ATCC BAA-1116)</name>
    <dbReference type="NCBI Taxonomy" id="2902295"/>
    <lineage>
        <taxon>Bacteria</taxon>
        <taxon>Pseudomonadati</taxon>
        <taxon>Pseudomonadota</taxon>
        <taxon>Gammaproteobacteria</taxon>
        <taxon>Vibrionales</taxon>
        <taxon>Vibrionaceae</taxon>
        <taxon>Vibrio</taxon>
    </lineage>
</organism>
<accession>A7MSH9</accession>
<dbReference type="EMBL" id="CP000789">
    <property type="protein sequence ID" value="ABU71597.1"/>
    <property type="molecule type" value="Genomic_DNA"/>
</dbReference>
<dbReference type="RefSeq" id="WP_012128248.1">
    <property type="nucleotide sequence ID" value="NC_009783.1"/>
</dbReference>
<dbReference type="SMR" id="A7MSH9"/>
<dbReference type="KEGG" id="vha:VIBHAR_02636"/>
<dbReference type="PATRIC" id="fig|338187.25.peg.70"/>
<dbReference type="Proteomes" id="UP000008152">
    <property type="component" value="Chromosome I"/>
</dbReference>
<dbReference type="GO" id="GO:0005886">
    <property type="term" value="C:plasma membrane"/>
    <property type="evidence" value="ECO:0007669"/>
    <property type="project" value="UniProtKB-SubCell"/>
</dbReference>
<dbReference type="GO" id="GO:0008324">
    <property type="term" value="F:monoatomic cation transmembrane transporter activity"/>
    <property type="evidence" value="ECO:0007669"/>
    <property type="project" value="InterPro"/>
</dbReference>
<dbReference type="GO" id="GO:0006813">
    <property type="term" value="P:potassium ion transport"/>
    <property type="evidence" value="ECO:0007669"/>
    <property type="project" value="InterPro"/>
</dbReference>
<dbReference type="Gene3D" id="3.30.70.1450">
    <property type="entry name" value="Regulator of K+ conductance, C-terminal domain"/>
    <property type="match status" value="2"/>
</dbReference>
<dbReference type="HAMAP" id="MF_01015">
    <property type="entry name" value="YbjL"/>
    <property type="match status" value="1"/>
</dbReference>
<dbReference type="InterPro" id="IPR050144">
    <property type="entry name" value="AAE_transporter"/>
</dbReference>
<dbReference type="InterPro" id="IPR006037">
    <property type="entry name" value="RCK_C"/>
</dbReference>
<dbReference type="InterPro" id="IPR036721">
    <property type="entry name" value="RCK_C_sf"/>
</dbReference>
<dbReference type="InterPro" id="IPR023017">
    <property type="entry name" value="Transp_YbjL_put"/>
</dbReference>
<dbReference type="InterPro" id="IPR006512">
    <property type="entry name" value="YidE_YbjL"/>
</dbReference>
<dbReference type="NCBIfam" id="NF003440">
    <property type="entry name" value="PRK04972.1"/>
    <property type="match status" value="1"/>
</dbReference>
<dbReference type="NCBIfam" id="TIGR01625">
    <property type="entry name" value="YidE_YbjL_dupl"/>
    <property type="match status" value="2"/>
</dbReference>
<dbReference type="PANTHER" id="PTHR30445">
    <property type="entry name" value="K(+)_H(+) ANTIPORTER SUBUNIT KHTT"/>
    <property type="match status" value="1"/>
</dbReference>
<dbReference type="PANTHER" id="PTHR30445:SF10">
    <property type="entry name" value="TRANSPORT PROTEIN YBJL-RELATED"/>
    <property type="match status" value="1"/>
</dbReference>
<dbReference type="Pfam" id="PF06826">
    <property type="entry name" value="Asp-Al_Ex"/>
    <property type="match status" value="2"/>
</dbReference>
<dbReference type="Pfam" id="PF02080">
    <property type="entry name" value="TrkA_C"/>
    <property type="match status" value="2"/>
</dbReference>
<dbReference type="SUPFAM" id="SSF116726">
    <property type="entry name" value="TrkA C-terminal domain-like"/>
    <property type="match status" value="2"/>
</dbReference>
<dbReference type="PROSITE" id="PS51202">
    <property type="entry name" value="RCK_C"/>
    <property type="match status" value="2"/>
</dbReference>
<gene>
    <name type="ordered locus">VIBHAR_02636</name>
</gene>